<protein>
    <recommendedName>
        <fullName evidence="5">Serine hydroxymethyltransferase, mitochondrial</fullName>
        <shortName evidence="5">SHMT</shortName>
        <ecNumber evidence="2">2.1.2.1</ecNumber>
    </recommendedName>
    <alternativeName>
        <fullName evidence="5">Glycine hydroxymethyltransferase</fullName>
    </alternativeName>
    <alternativeName>
        <fullName evidence="5">Serine methylase</fullName>
    </alternativeName>
</protein>
<reference key="1">
    <citation type="journal article" date="2005" name="Science">
        <title>The transcriptional landscape of the mammalian genome.</title>
        <authorList>
            <person name="Carninci P."/>
            <person name="Kasukawa T."/>
            <person name="Katayama S."/>
            <person name="Gough J."/>
            <person name="Frith M.C."/>
            <person name="Maeda N."/>
            <person name="Oyama R."/>
            <person name="Ravasi T."/>
            <person name="Lenhard B."/>
            <person name="Wells C."/>
            <person name="Kodzius R."/>
            <person name="Shimokawa K."/>
            <person name="Bajic V.B."/>
            <person name="Brenner S.E."/>
            <person name="Batalov S."/>
            <person name="Forrest A.R."/>
            <person name="Zavolan M."/>
            <person name="Davis M.J."/>
            <person name="Wilming L.G."/>
            <person name="Aidinis V."/>
            <person name="Allen J.E."/>
            <person name="Ambesi-Impiombato A."/>
            <person name="Apweiler R."/>
            <person name="Aturaliya R.N."/>
            <person name="Bailey T.L."/>
            <person name="Bansal M."/>
            <person name="Baxter L."/>
            <person name="Beisel K.W."/>
            <person name="Bersano T."/>
            <person name="Bono H."/>
            <person name="Chalk A.M."/>
            <person name="Chiu K.P."/>
            <person name="Choudhary V."/>
            <person name="Christoffels A."/>
            <person name="Clutterbuck D.R."/>
            <person name="Crowe M.L."/>
            <person name="Dalla E."/>
            <person name="Dalrymple B.P."/>
            <person name="de Bono B."/>
            <person name="Della Gatta G."/>
            <person name="di Bernardo D."/>
            <person name="Down T."/>
            <person name="Engstrom P."/>
            <person name="Fagiolini M."/>
            <person name="Faulkner G."/>
            <person name="Fletcher C.F."/>
            <person name="Fukushima T."/>
            <person name="Furuno M."/>
            <person name="Futaki S."/>
            <person name="Gariboldi M."/>
            <person name="Georgii-Hemming P."/>
            <person name="Gingeras T.R."/>
            <person name="Gojobori T."/>
            <person name="Green R.E."/>
            <person name="Gustincich S."/>
            <person name="Harbers M."/>
            <person name="Hayashi Y."/>
            <person name="Hensch T.K."/>
            <person name="Hirokawa N."/>
            <person name="Hill D."/>
            <person name="Huminiecki L."/>
            <person name="Iacono M."/>
            <person name="Ikeo K."/>
            <person name="Iwama A."/>
            <person name="Ishikawa T."/>
            <person name="Jakt M."/>
            <person name="Kanapin A."/>
            <person name="Katoh M."/>
            <person name="Kawasawa Y."/>
            <person name="Kelso J."/>
            <person name="Kitamura H."/>
            <person name="Kitano H."/>
            <person name="Kollias G."/>
            <person name="Krishnan S.P."/>
            <person name="Kruger A."/>
            <person name="Kummerfeld S.K."/>
            <person name="Kurochkin I.V."/>
            <person name="Lareau L.F."/>
            <person name="Lazarevic D."/>
            <person name="Lipovich L."/>
            <person name="Liu J."/>
            <person name="Liuni S."/>
            <person name="McWilliam S."/>
            <person name="Madan Babu M."/>
            <person name="Madera M."/>
            <person name="Marchionni L."/>
            <person name="Matsuda H."/>
            <person name="Matsuzawa S."/>
            <person name="Miki H."/>
            <person name="Mignone F."/>
            <person name="Miyake S."/>
            <person name="Morris K."/>
            <person name="Mottagui-Tabar S."/>
            <person name="Mulder N."/>
            <person name="Nakano N."/>
            <person name="Nakauchi H."/>
            <person name="Ng P."/>
            <person name="Nilsson R."/>
            <person name="Nishiguchi S."/>
            <person name="Nishikawa S."/>
            <person name="Nori F."/>
            <person name="Ohara O."/>
            <person name="Okazaki Y."/>
            <person name="Orlando V."/>
            <person name="Pang K.C."/>
            <person name="Pavan W.J."/>
            <person name="Pavesi G."/>
            <person name="Pesole G."/>
            <person name="Petrovsky N."/>
            <person name="Piazza S."/>
            <person name="Reed J."/>
            <person name="Reid J.F."/>
            <person name="Ring B.Z."/>
            <person name="Ringwald M."/>
            <person name="Rost B."/>
            <person name="Ruan Y."/>
            <person name="Salzberg S.L."/>
            <person name="Sandelin A."/>
            <person name="Schneider C."/>
            <person name="Schoenbach C."/>
            <person name="Sekiguchi K."/>
            <person name="Semple C.A."/>
            <person name="Seno S."/>
            <person name="Sessa L."/>
            <person name="Sheng Y."/>
            <person name="Shibata Y."/>
            <person name="Shimada H."/>
            <person name="Shimada K."/>
            <person name="Silva D."/>
            <person name="Sinclair B."/>
            <person name="Sperling S."/>
            <person name="Stupka E."/>
            <person name="Sugiura K."/>
            <person name="Sultana R."/>
            <person name="Takenaka Y."/>
            <person name="Taki K."/>
            <person name="Tammoja K."/>
            <person name="Tan S.L."/>
            <person name="Tang S."/>
            <person name="Taylor M.S."/>
            <person name="Tegner J."/>
            <person name="Teichmann S.A."/>
            <person name="Ueda H.R."/>
            <person name="van Nimwegen E."/>
            <person name="Verardo R."/>
            <person name="Wei C.L."/>
            <person name="Yagi K."/>
            <person name="Yamanishi H."/>
            <person name="Zabarovsky E."/>
            <person name="Zhu S."/>
            <person name="Zimmer A."/>
            <person name="Hide W."/>
            <person name="Bult C."/>
            <person name="Grimmond S.M."/>
            <person name="Teasdale R.D."/>
            <person name="Liu E.T."/>
            <person name="Brusic V."/>
            <person name="Quackenbush J."/>
            <person name="Wahlestedt C."/>
            <person name="Mattick J.S."/>
            <person name="Hume D.A."/>
            <person name="Kai C."/>
            <person name="Sasaki D."/>
            <person name="Tomaru Y."/>
            <person name="Fukuda S."/>
            <person name="Kanamori-Katayama M."/>
            <person name="Suzuki M."/>
            <person name="Aoki J."/>
            <person name="Arakawa T."/>
            <person name="Iida J."/>
            <person name="Imamura K."/>
            <person name="Itoh M."/>
            <person name="Kato T."/>
            <person name="Kawaji H."/>
            <person name="Kawagashira N."/>
            <person name="Kawashima T."/>
            <person name="Kojima M."/>
            <person name="Kondo S."/>
            <person name="Konno H."/>
            <person name="Nakano K."/>
            <person name="Ninomiya N."/>
            <person name="Nishio T."/>
            <person name="Okada M."/>
            <person name="Plessy C."/>
            <person name="Shibata K."/>
            <person name="Shiraki T."/>
            <person name="Suzuki S."/>
            <person name="Tagami M."/>
            <person name="Waki K."/>
            <person name="Watahiki A."/>
            <person name="Okamura-Oho Y."/>
            <person name="Suzuki H."/>
            <person name="Kawai J."/>
            <person name="Hayashizaki Y."/>
        </authorList>
    </citation>
    <scope>NUCLEOTIDE SEQUENCE [LARGE SCALE MRNA] (ISOFORMS 1 AND 2)</scope>
    <source>
        <strain>C57BL/6J</strain>
        <tissue>Embryo</tissue>
        <tissue>Spinal ganglion</tissue>
        <tissue>Thymus</tissue>
    </source>
</reference>
<reference key="2">
    <citation type="journal article" date="2009" name="PLoS Biol.">
        <title>Lineage-specific biology revealed by a finished genome assembly of the mouse.</title>
        <authorList>
            <person name="Church D.M."/>
            <person name="Goodstadt L."/>
            <person name="Hillier L.W."/>
            <person name="Zody M.C."/>
            <person name="Goldstein S."/>
            <person name="She X."/>
            <person name="Bult C.J."/>
            <person name="Agarwala R."/>
            <person name="Cherry J.L."/>
            <person name="DiCuccio M."/>
            <person name="Hlavina W."/>
            <person name="Kapustin Y."/>
            <person name="Meric P."/>
            <person name="Maglott D."/>
            <person name="Birtle Z."/>
            <person name="Marques A.C."/>
            <person name="Graves T."/>
            <person name="Zhou S."/>
            <person name="Teague B."/>
            <person name="Potamousis K."/>
            <person name="Churas C."/>
            <person name="Place M."/>
            <person name="Herschleb J."/>
            <person name="Runnheim R."/>
            <person name="Forrest D."/>
            <person name="Amos-Landgraf J."/>
            <person name="Schwartz D.C."/>
            <person name="Cheng Z."/>
            <person name="Lindblad-Toh K."/>
            <person name="Eichler E.E."/>
            <person name="Ponting C.P."/>
        </authorList>
    </citation>
    <scope>NUCLEOTIDE SEQUENCE [LARGE SCALE GENOMIC DNA]</scope>
    <source>
        <strain>C57BL/6J</strain>
    </source>
</reference>
<reference key="3">
    <citation type="journal article" date="2004" name="Genome Res.">
        <title>The status, quality, and expansion of the NIH full-length cDNA project: the Mammalian Gene Collection (MGC).</title>
        <authorList>
            <consortium name="The MGC Project Team"/>
        </authorList>
    </citation>
    <scope>NUCLEOTIDE SEQUENCE [LARGE SCALE MRNA] (ISOFORM 1)</scope>
    <source>
        <strain>FVB/N</strain>
        <tissue>Liver</tissue>
    </source>
</reference>
<reference key="4">
    <citation type="journal article" date="2010" name="Cell">
        <title>A tissue-specific atlas of mouse protein phosphorylation and expression.</title>
        <authorList>
            <person name="Huttlin E.L."/>
            <person name="Jedrychowski M.P."/>
            <person name="Elias J.E."/>
            <person name="Goswami T."/>
            <person name="Rad R."/>
            <person name="Beausoleil S.A."/>
            <person name="Villen J."/>
            <person name="Haas W."/>
            <person name="Sowa M.E."/>
            <person name="Gygi S.P."/>
        </authorList>
    </citation>
    <scope>IDENTIFICATION BY MASS SPECTROMETRY [LARGE SCALE ANALYSIS]</scope>
    <source>
        <tissue>Brain</tissue>
        <tissue>Brown adipose tissue</tissue>
        <tissue>Heart</tissue>
        <tissue>Kidney</tissue>
        <tissue>Liver</tissue>
        <tissue>Lung</tissue>
        <tissue>Pancreas</tissue>
        <tissue>Spleen</tissue>
        <tissue>Testis</tissue>
    </source>
</reference>
<reference key="5">
    <citation type="journal article" date="2013" name="Mol. Cell">
        <title>SIRT5-mediated lysine desuccinylation impacts diverse metabolic pathways.</title>
        <authorList>
            <person name="Park J."/>
            <person name="Chen Y."/>
            <person name="Tishkoff D.X."/>
            <person name="Peng C."/>
            <person name="Tan M."/>
            <person name="Dai L."/>
            <person name="Xie Z."/>
            <person name="Zhang Y."/>
            <person name="Zwaans B.M."/>
            <person name="Skinner M.E."/>
            <person name="Lombard D.B."/>
            <person name="Zhao Y."/>
        </authorList>
    </citation>
    <scope>ACETYLATION [LARGE SCALE ANALYSIS] AT LYS-474</scope>
    <scope>IDENTIFICATION BY MASS SPECTROMETRY [LARGE SCALE ANALYSIS]</scope>
    <source>
        <tissue>Embryonic fibroblast</tissue>
    </source>
</reference>
<reference key="6">
    <citation type="journal article" date="2018" name="Mol. Cell">
        <title>Serine catabolism by SHMT2 is required for proper mitochondrial translation initiation and maintenance of formylmethionyl-tRNAs.</title>
        <authorList>
            <person name="Minton D.R."/>
            <person name="Nam M."/>
            <person name="McLaughlin D.J."/>
            <person name="Shin J."/>
            <person name="Bayraktar E.C."/>
            <person name="Alvarez S.W."/>
            <person name="Sviderskiy V.O."/>
            <person name="Papagiannakopoulos T."/>
            <person name="Sabatini D.M."/>
            <person name="Birsoy K."/>
            <person name="Possemato R."/>
        </authorList>
    </citation>
    <scope>FUNCTION</scope>
</reference>
<reference key="7">
    <citation type="journal article" date="2018" name="Sci. Rep.">
        <title>Mice deficient in the Shmt2 gene have mitochondrial respiration defects and are embryonic lethal.</title>
        <authorList>
            <person name="Tani H."/>
            <person name="Ohnishi S."/>
            <person name="Shitara H."/>
            <person name="Mito T."/>
            <person name="Yamaguchi M."/>
            <person name="Yonekawa H."/>
            <person name="Hashizume O."/>
            <person name="Ishikawa K."/>
            <person name="Nakada K."/>
            <person name="Hayashi J.I."/>
        </authorList>
    </citation>
    <scope>DISRUPTION PHENOTYPE</scope>
    <scope>DEVELOPMENTAL STAGE</scope>
</reference>
<proteinExistence type="evidence at protein level"/>
<dbReference type="EC" id="2.1.2.1" evidence="2"/>
<dbReference type="EMBL" id="AK012355">
    <property type="protein sequence ID" value="BAB28184.1"/>
    <property type="molecule type" value="mRNA"/>
</dbReference>
<dbReference type="EMBL" id="AK037339">
    <property type="protein sequence ID" value="BAC29790.1"/>
    <property type="molecule type" value="mRNA"/>
</dbReference>
<dbReference type="EMBL" id="AK051207">
    <property type="protein sequence ID" value="BAC34556.1"/>
    <property type="molecule type" value="mRNA"/>
</dbReference>
<dbReference type="EMBL" id="AK162421">
    <property type="protein sequence ID" value="BAE36907.1"/>
    <property type="molecule type" value="mRNA"/>
</dbReference>
<dbReference type="EMBL" id="AK169192">
    <property type="protein sequence ID" value="BAE40968.1"/>
    <property type="molecule type" value="mRNA"/>
</dbReference>
<dbReference type="EMBL" id="AC167719">
    <property type="status" value="NOT_ANNOTATED_CDS"/>
    <property type="molecule type" value="Genomic_DNA"/>
</dbReference>
<dbReference type="EMBL" id="BC004825">
    <property type="protein sequence ID" value="AAH04825.1"/>
    <property type="molecule type" value="mRNA"/>
</dbReference>
<dbReference type="EMBL" id="BC051396">
    <property type="protein sequence ID" value="AAH51396.1"/>
    <property type="molecule type" value="mRNA"/>
</dbReference>
<dbReference type="CCDS" id="CCDS24244.1">
    <molecule id="Q9CZN7-1"/>
</dbReference>
<dbReference type="CCDS" id="CCDS88105.1">
    <molecule id="Q9CZN7-2"/>
</dbReference>
<dbReference type="RefSeq" id="NP_001239245.1">
    <molecule id="Q9CZN7-2"/>
    <property type="nucleotide sequence ID" value="NM_001252316.1"/>
</dbReference>
<dbReference type="RefSeq" id="NP_082506.1">
    <molecule id="Q9CZN7-1"/>
    <property type="nucleotide sequence ID" value="NM_028230.4"/>
</dbReference>
<dbReference type="SMR" id="Q9CZN7"/>
<dbReference type="FunCoup" id="Q9CZN7">
    <property type="interactions" value="2094"/>
</dbReference>
<dbReference type="IntAct" id="Q9CZN7">
    <property type="interactions" value="2"/>
</dbReference>
<dbReference type="MINT" id="Q9CZN7"/>
<dbReference type="STRING" id="10090.ENSMUSP00000026470"/>
<dbReference type="GlyGen" id="Q9CZN7">
    <property type="glycosylation" value="2 sites, 1 O-linked glycan (1 site)"/>
</dbReference>
<dbReference type="iPTMnet" id="Q9CZN7"/>
<dbReference type="PhosphoSitePlus" id="Q9CZN7"/>
<dbReference type="SwissPalm" id="Q9CZN7"/>
<dbReference type="jPOST" id="Q9CZN7"/>
<dbReference type="PaxDb" id="10090-ENSMUSP00000026470"/>
<dbReference type="ProteomicsDB" id="338698">
    <molecule id="Q9CZN7-1"/>
</dbReference>
<dbReference type="ProteomicsDB" id="342776"/>
<dbReference type="Pumba" id="Q9CZN7"/>
<dbReference type="Antibodypedia" id="16145">
    <property type="antibodies" value="267 antibodies from 30 providers"/>
</dbReference>
<dbReference type="DNASU" id="108037"/>
<dbReference type="Ensembl" id="ENSMUST00000026470.6">
    <molecule id="Q9CZN7-1"/>
    <property type="protein sequence ID" value="ENSMUSP00000026470.5"/>
    <property type="gene ID" value="ENSMUSG00000025403.6"/>
</dbReference>
<dbReference type="Ensembl" id="ENSMUST00000219239.2">
    <molecule id="Q9CZN7-2"/>
    <property type="protein sequence ID" value="ENSMUSP00000151616.2"/>
    <property type="gene ID" value="ENSMUSG00000025403.6"/>
</dbReference>
<dbReference type="GeneID" id="108037"/>
<dbReference type="KEGG" id="mmu:108037"/>
<dbReference type="UCSC" id="uc007hju.2">
    <molecule id="Q9CZN7-1"/>
    <property type="organism name" value="mouse"/>
</dbReference>
<dbReference type="UCSC" id="uc007hjv.2">
    <property type="organism name" value="mouse"/>
</dbReference>
<dbReference type="AGR" id="MGI:1277989"/>
<dbReference type="CTD" id="6472"/>
<dbReference type="MGI" id="MGI:1277989">
    <property type="gene designation" value="Shmt2"/>
</dbReference>
<dbReference type="VEuPathDB" id="HostDB:ENSMUSG00000025403"/>
<dbReference type="eggNOG" id="KOG2467">
    <property type="taxonomic scope" value="Eukaryota"/>
</dbReference>
<dbReference type="GeneTree" id="ENSGT00390000002762"/>
<dbReference type="HOGENOM" id="CLU_022477_0_1_1"/>
<dbReference type="InParanoid" id="Q9CZN7"/>
<dbReference type="OMA" id="TQPFFSQ"/>
<dbReference type="OrthoDB" id="10265628at2759"/>
<dbReference type="PhylomeDB" id="Q9CZN7"/>
<dbReference type="TreeFam" id="TF314667"/>
<dbReference type="Reactome" id="R-MMU-196757">
    <property type="pathway name" value="Metabolism of folate and pterines"/>
</dbReference>
<dbReference type="Reactome" id="R-MMU-9013408">
    <property type="pathway name" value="RHOG GTPase cycle"/>
</dbReference>
<dbReference type="Reactome" id="R-MMU-9837999">
    <property type="pathway name" value="Mitochondrial protein degradation"/>
</dbReference>
<dbReference type="UniPathway" id="UPA00193"/>
<dbReference type="BioGRID-ORCS" id="108037">
    <property type="hits" value="10 hits in 79 CRISPR screens"/>
</dbReference>
<dbReference type="ChiTaRS" id="Shmt2">
    <property type="organism name" value="mouse"/>
</dbReference>
<dbReference type="PRO" id="PR:Q9CZN7"/>
<dbReference type="Proteomes" id="UP000000589">
    <property type="component" value="Chromosome 10"/>
</dbReference>
<dbReference type="RNAct" id="Q9CZN7">
    <property type="molecule type" value="protein"/>
</dbReference>
<dbReference type="Bgee" id="ENSMUSG00000025403">
    <property type="expression patterns" value="Expressed in left lobe of liver and 257 other cell types or tissues"/>
</dbReference>
<dbReference type="GO" id="GO:0070552">
    <property type="term" value="C:BRISC complex"/>
    <property type="evidence" value="ECO:0007669"/>
    <property type="project" value="Ensembl"/>
</dbReference>
<dbReference type="GO" id="GO:0015630">
    <property type="term" value="C:microtubule cytoskeleton"/>
    <property type="evidence" value="ECO:0007669"/>
    <property type="project" value="Ensembl"/>
</dbReference>
<dbReference type="GO" id="GO:0005743">
    <property type="term" value="C:mitochondrial inner membrane"/>
    <property type="evidence" value="ECO:0007005"/>
    <property type="project" value="MGI"/>
</dbReference>
<dbReference type="GO" id="GO:0005759">
    <property type="term" value="C:mitochondrial matrix"/>
    <property type="evidence" value="ECO:0000314"/>
    <property type="project" value="MGI"/>
</dbReference>
<dbReference type="GO" id="GO:0042645">
    <property type="term" value="C:mitochondrial nucleoid"/>
    <property type="evidence" value="ECO:0007669"/>
    <property type="project" value="UniProtKB-SubCell"/>
</dbReference>
<dbReference type="GO" id="GO:0005739">
    <property type="term" value="C:mitochondrion"/>
    <property type="evidence" value="ECO:0007005"/>
    <property type="project" value="MGI"/>
</dbReference>
<dbReference type="GO" id="GO:0005634">
    <property type="term" value="C:nucleus"/>
    <property type="evidence" value="ECO:0000314"/>
    <property type="project" value="MGI"/>
</dbReference>
<dbReference type="GO" id="GO:0016597">
    <property type="term" value="F:amino acid binding"/>
    <property type="evidence" value="ECO:0007669"/>
    <property type="project" value="Ensembl"/>
</dbReference>
<dbReference type="GO" id="GO:0003682">
    <property type="term" value="F:chromatin binding"/>
    <property type="evidence" value="ECO:0007669"/>
    <property type="project" value="Ensembl"/>
</dbReference>
<dbReference type="GO" id="GO:0004372">
    <property type="term" value="F:glycine hydroxymethyltransferase activity"/>
    <property type="evidence" value="ECO:0000315"/>
    <property type="project" value="MGI"/>
</dbReference>
<dbReference type="GO" id="GO:0042802">
    <property type="term" value="F:identical protein binding"/>
    <property type="evidence" value="ECO:0007669"/>
    <property type="project" value="Ensembl"/>
</dbReference>
<dbReference type="GO" id="GO:0008732">
    <property type="term" value="F:L-allo-threonine aldolase activity"/>
    <property type="evidence" value="ECO:0007669"/>
    <property type="project" value="Ensembl"/>
</dbReference>
<dbReference type="GO" id="GO:0030170">
    <property type="term" value="F:pyridoxal phosphate binding"/>
    <property type="evidence" value="ECO:0007669"/>
    <property type="project" value="Ensembl"/>
</dbReference>
<dbReference type="GO" id="GO:0015943">
    <property type="term" value="P:formate biosynthetic process"/>
    <property type="evidence" value="ECO:0000315"/>
    <property type="project" value="MGI"/>
</dbReference>
<dbReference type="GO" id="GO:0019264">
    <property type="term" value="P:glycine biosynthetic process from serine"/>
    <property type="evidence" value="ECO:0007669"/>
    <property type="project" value="Ensembl"/>
</dbReference>
<dbReference type="GO" id="GO:0006544">
    <property type="term" value="P:glycine metabolic process"/>
    <property type="evidence" value="ECO:0000250"/>
    <property type="project" value="UniProtKB"/>
</dbReference>
<dbReference type="GO" id="GO:0006564">
    <property type="term" value="P:L-serine biosynthetic process"/>
    <property type="evidence" value="ECO:0007669"/>
    <property type="project" value="Ensembl"/>
</dbReference>
<dbReference type="GO" id="GO:0006563">
    <property type="term" value="P:L-serine metabolic process"/>
    <property type="evidence" value="ECO:0000250"/>
    <property type="project" value="UniProtKB"/>
</dbReference>
<dbReference type="GO" id="GO:0006730">
    <property type="term" value="P:one-carbon metabolic process"/>
    <property type="evidence" value="ECO:0000250"/>
    <property type="project" value="UniProtKB"/>
</dbReference>
<dbReference type="GO" id="GO:0008284">
    <property type="term" value="P:positive regulation of cell population proliferation"/>
    <property type="evidence" value="ECO:0007669"/>
    <property type="project" value="Ensembl"/>
</dbReference>
<dbReference type="GO" id="GO:0051289">
    <property type="term" value="P:protein homotetramerization"/>
    <property type="evidence" value="ECO:0000250"/>
    <property type="project" value="UniProtKB"/>
</dbReference>
<dbReference type="GO" id="GO:0070536">
    <property type="term" value="P:protein K63-linked deubiquitination"/>
    <property type="evidence" value="ECO:0007669"/>
    <property type="project" value="Ensembl"/>
</dbReference>
<dbReference type="GO" id="GO:1903715">
    <property type="term" value="P:regulation of aerobic respiration"/>
    <property type="evidence" value="ECO:0000315"/>
    <property type="project" value="UniProtKB"/>
</dbReference>
<dbReference type="GO" id="GO:0070129">
    <property type="term" value="P:regulation of mitochondrial translation"/>
    <property type="evidence" value="ECO:0000315"/>
    <property type="project" value="UniProtKB"/>
</dbReference>
<dbReference type="GO" id="GO:0002082">
    <property type="term" value="P:regulation of oxidative phosphorylation"/>
    <property type="evidence" value="ECO:0000315"/>
    <property type="project" value="UniProtKB"/>
</dbReference>
<dbReference type="GO" id="GO:0034340">
    <property type="term" value="P:response to type I interferon"/>
    <property type="evidence" value="ECO:0007669"/>
    <property type="project" value="Ensembl"/>
</dbReference>
<dbReference type="GO" id="GO:0035999">
    <property type="term" value="P:tetrahydrofolate interconversion"/>
    <property type="evidence" value="ECO:0000315"/>
    <property type="project" value="MGI"/>
</dbReference>
<dbReference type="CDD" id="cd00378">
    <property type="entry name" value="SHMT"/>
    <property type="match status" value="1"/>
</dbReference>
<dbReference type="FunFam" id="3.40.640.10:FF:000097">
    <property type="entry name" value="Serine hydroxymethyltransferase"/>
    <property type="match status" value="1"/>
</dbReference>
<dbReference type="FunFam" id="3.90.1150.10:FF:000048">
    <property type="entry name" value="Serine hydroxymethyltransferase, mitochondrial"/>
    <property type="match status" value="1"/>
</dbReference>
<dbReference type="Gene3D" id="3.90.1150.10">
    <property type="entry name" value="Aspartate Aminotransferase, domain 1"/>
    <property type="match status" value="1"/>
</dbReference>
<dbReference type="Gene3D" id="3.40.640.10">
    <property type="entry name" value="Type I PLP-dependent aspartate aminotransferase-like (Major domain)"/>
    <property type="match status" value="1"/>
</dbReference>
<dbReference type="HAMAP" id="MF_00051">
    <property type="entry name" value="SHMT"/>
    <property type="match status" value="1"/>
</dbReference>
<dbReference type="InterPro" id="IPR015424">
    <property type="entry name" value="PyrdxlP-dep_Trfase"/>
</dbReference>
<dbReference type="InterPro" id="IPR015421">
    <property type="entry name" value="PyrdxlP-dep_Trfase_major"/>
</dbReference>
<dbReference type="InterPro" id="IPR015422">
    <property type="entry name" value="PyrdxlP-dep_Trfase_small"/>
</dbReference>
<dbReference type="InterPro" id="IPR001085">
    <property type="entry name" value="Ser_HO-MeTrfase"/>
</dbReference>
<dbReference type="InterPro" id="IPR049943">
    <property type="entry name" value="Ser_HO-MeTrfase-like"/>
</dbReference>
<dbReference type="InterPro" id="IPR019798">
    <property type="entry name" value="Ser_HO-MeTrfase_PLP_BS"/>
</dbReference>
<dbReference type="InterPro" id="IPR039429">
    <property type="entry name" value="SHMT-like_dom"/>
</dbReference>
<dbReference type="NCBIfam" id="NF000586">
    <property type="entry name" value="PRK00011.1"/>
    <property type="match status" value="1"/>
</dbReference>
<dbReference type="PANTHER" id="PTHR11680">
    <property type="entry name" value="SERINE HYDROXYMETHYLTRANSFERASE"/>
    <property type="match status" value="1"/>
</dbReference>
<dbReference type="PANTHER" id="PTHR11680:SF28">
    <property type="entry name" value="SERINE HYDROXYMETHYLTRANSFERASE, MITOCHONDRIAL"/>
    <property type="match status" value="1"/>
</dbReference>
<dbReference type="Pfam" id="PF00464">
    <property type="entry name" value="SHMT"/>
    <property type="match status" value="1"/>
</dbReference>
<dbReference type="PIRSF" id="PIRSF000412">
    <property type="entry name" value="SHMT"/>
    <property type="match status" value="1"/>
</dbReference>
<dbReference type="SUPFAM" id="SSF53383">
    <property type="entry name" value="PLP-dependent transferases"/>
    <property type="match status" value="1"/>
</dbReference>
<dbReference type="PROSITE" id="PS00096">
    <property type="entry name" value="SHMT"/>
    <property type="match status" value="1"/>
</dbReference>
<keyword id="KW-0007">Acetylation</keyword>
<keyword id="KW-0025">Alternative splicing</keyword>
<keyword id="KW-0963">Cytoplasm</keyword>
<keyword id="KW-0472">Membrane</keyword>
<keyword id="KW-0496">Mitochondrion</keyword>
<keyword id="KW-0999">Mitochondrion inner membrane</keyword>
<keyword id="KW-1135">Mitochondrion nucleoid</keyword>
<keyword id="KW-0539">Nucleus</keyword>
<keyword id="KW-0554">One-carbon metabolism</keyword>
<keyword id="KW-0597">Phosphoprotein</keyword>
<keyword id="KW-0663">Pyridoxal phosphate</keyword>
<keyword id="KW-1185">Reference proteome</keyword>
<keyword id="KW-0808">Transferase</keyword>
<keyword id="KW-0809">Transit peptide</keyword>
<evidence type="ECO:0000250" key="1">
    <source>
        <dbReference type="UniProtKB" id="P14519"/>
    </source>
</evidence>
<evidence type="ECO:0000250" key="2">
    <source>
        <dbReference type="UniProtKB" id="P34897"/>
    </source>
</evidence>
<evidence type="ECO:0000269" key="3">
    <source>
    </source>
</evidence>
<evidence type="ECO:0000269" key="4">
    <source>
    </source>
</evidence>
<evidence type="ECO:0000305" key="5"/>
<evidence type="ECO:0000312" key="6">
    <source>
        <dbReference type="EMBL" id="BAB28184.1"/>
    </source>
</evidence>
<evidence type="ECO:0000312" key="7">
    <source>
        <dbReference type="MGI" id="MGI:1277989"/>
    </source>
</evidence>
<evidence type="ECO:0007744" key="8">
    <source>
    </source>
</evidence>
<accession>Q9CZN7</accession>
<accession>Q3TFD0</accession>
<accession>Q99K87</accession>
<comment type="function">
    <text evidence="2 4">Catalyzes the cleavage of serine to glycine accompanied with the production of 5,10-methylenetetrahydrofolate, an essential intermediate for purine biosynthesis (By similarity). Serine provides the major source of folate one-carbon in cells by catalyzing the transfer of one carbon from serine to tetrahydrofolate (By similarity). Contributes to the de novo mitochondrial thymidylate biosynthesis pathway via its role in glycine and tetrahydrofolate metabolism: thymidylate biosynthesis is required to prevent uracil accumulation in mtDNA (By similarity). Also required for mitochondrial translation by producing 5,10-methylenetetrahydrofolate; 5,10-methylenetetrahydrofolate providing methyl donors to produce the taurinomethyluridine base at the wobble position of some mitochondrial tRNAs (PubMed:29452640). Associates with mitochondrial DNA (By similarity). In addition to its role in mitochondria, also plays a role in the deubiquitination of target proteins as component of the BRISC complex: required for IFNAR1 deubiquitination by the BRISC complex (By similarity).</text>
</comment>
<comment type="catalytic activity">
    <reaction evidence="2">
        <text>(6R)-5,10-methylene-5,6,7,8-tetrahydrofolate + glycine + H2O = (6S)-5,6,7,8-tetrahydrofolate + L-serine</text>
        <dbReference type="Rhea" id="RHEA:15481"/>
        <dbReference type="ChEBI" id="CHEBI:15377"/>
        <dbReference type="ChEBI" id="CHEBI:15636"/>
        <dbReference type="ChEBI" id="CHEBI:33384"/>
        <dbReference type="ChEBI" id="CHEBI:57305"/>
        <dbReference type="ChEBI" id="CHEBI:57453"/>
        <dbReference type="EC" id="2.1.2.1"/>
    </reaction>
    <physiologicalReaction direction="right-to-left" evidence="2">
        <dbReference type="Rhea" id="RHEA:15483"/>
    </physiologicalReaction>
</comment>
<comment type="cofactor">
    <cofactor evidence="2">
        <name>pyridoxal 5'-phosphate</name>
        <dbReference type="ChEBI" id="CHEBI:597326"/>
    </cofactor>
</comment>
<comment type="activity regulation">
    <text evidence="2">Hydroxymethyltransferase is inhibited by succinylation at Lys-280.</text>
</comment>
<comment type="pathway">
    <text evidence="2">One-carbon metabolism; tetrahydrofolate interconversion.</text>
</comment>
<comment type="subunit">
    <text evidence="2">Homotetramer; in the presence of bound pyridoxal 5'-phosphate. Homodimer; in the absence of bound pyridoxal 5'-phosphate. Pyridoxal 5'-phosphate binding mediates an important conformation change that is required for tetramerization. Interacts with ABRAXAS2; the interaction is direct. Identified in a complex with ABRAXAS2 and the other subunits of the BRISC complex, at least composed of the ABRAXAS2, BRCC3/BRCC36, BABAM2 and BABAM1/NBA1. Identified in a complex with ABRAXAS2 and IFNAR1. Interacts with KIRREL3.</text>
</comment>
<comment type="subcellular location">
    <subcellularLocation>
        <location evidence="2">Mitochondrion</location>
    </subcellularLocation>
    <subcellularLocation>
        <location evidence="2">Mitochondrion matrix</location>
        <location evidence="2">Mitochondrion nucleoid</location>
    </subcellularLocation>
    <subcellularLocation>
        <location evidence="2">Mitochondrion inner membrane</location>
    </subcellularLocation>
    <subcellularLocation>
        <location evidence="2">Cytoplasm</location>
    </subcellularLocation>
    <subcellularLocation>
        <location evidence="2">Nucleus</location>
    </subcellularLocation>
    <text evidence="2">Mainly localizes in the mitochondrion. Also found in the cytoplasm and nucleus as part of the BRISC complex.</text>
</comment>
<comment type="alternative products">
    <event type="alternative splicing"/>
    <isoform>
        <id>Q9CZN7-1</id>
        <name>1</name>
        <sequence type="displayed"/>
    </isoform>
    <isoform>
        <id>Q9CZN7-2</id>
        <name>2</name>
        <sequence type="described" ref="VSP_059519"/>
    </isoform>
</comment>
<comment type="developmental stage">
    <text evidence="3">Present in the placenta, brain and liver during embryonic development (at protein level).</text>
</comment>
<comment type="PTM">
    <text evidence="2">Succinylation at Lys-280 inhibits the hydroxymethyltransferase activity. Desuccinylation by SIRT5 restores the activity, leading to promote cell proliferation.</text>
</comment>
<comment type="disruption phenotype">
    <text evidence="3">Embryonic lethality after 13.5 days post coitum (dpc) due to mitochondrial respiration defects and retardation of cell growth. Mitochondrial respiration defects are due to reduction of mitochondrial translation.</text>
</comment>
<comment type="miscellaneous">
    <text evidence="5">In eukaryotes there are two forms of the enzymes: a cytosolic one and a mitochondrial one.</text>
</comment>
<comment type="similarity">
    <text evidence="5">Belongs to the SHMT family.</text>
</comment>
<feature type="transit peptide" description="Mitochondrion" evidence="1">
    <location>
        <begin position="1"/>
        <end position="29"/>
    </location>
</feature>
<feature type="chain" id="PRO_0000443804" description="Serine hydroxymethyltransferase, mitochondrial">
    <location>
        <begin position="30"/>
        <end position="504"/>
    </location>
</feature>
<feature type="modified residue" description="N6-acetyllysine" evidence="2">
    <location>
        <position position="103"/>
    </location>
</feature>
<feature type="modified residue" description="N6-acetyllysine" evidence="2">
    <location>
        <position position="181"/>
    </location>
</feature>
<feature type="modified residue" description="N6-acetyllysine" evidence="2">
    <location>
        <position position="196"/>
    </location>
</feature>
<feature type="modified residue" description="N6-(pyridoxal phosphate)lysine; alternate" evidence="2">
    <location>
        <position position="280"/>
    </location>
</feature>
<feature type="modified residue" description="N6-succinyllysine; alternate" evidence="2">
    <location>
        <position position="280"/>
    </location>
</feature>
<feature type="modified residue" description="N6-acetyllysine" evidence="2">
    <location>
        <position position="464"/>
    </location>
</feature>
<feature type="modified residue" description="N6-acetyllysine" evidence="2">
    <location>
        <position position="469"/>
    </location>
</feature>
<feature type="modified residue" description="Phosphoserine" evidence="2">
    <location>
        <position position="470"/>
    </location>
</feature>
<feature type="modified residue" description="N6-acetyllysine" evidence="8">
    <location>
        <position position="474"/>
    </location>
</feature>
<feature type="splice variant" id="VSP_059519" description="In isoform 2.">
    <location>
        <begin position="12"/>
        <end position="14"/>
    </location>
</feature>
<feature type="sequence conflict" description="In Ref. 3; AAH04825/AAH51396." evidence="5" ref="3">
    <original>A</original>
    <variation>T</variation>
    <location>
        <position position="40"/>
    </location>
</feature>
<feature type="sequence conflict" description="In Ref. 3; AAH04825/AAH51396." evidence="5" ref="3">
    <original>R</original>
    <variation>K</variation>
    <location>
        <position position="238"/>
    </location>
</feature>
<organism evidence="6">
    <name type="scientific">Mus musculus</name>
    <name type="common">Mouse</name>
    <dbReference type="NCBI Taxonomy" id="10090"/>
    <lineage>
        <taxon>Eukaryota</taxon>
        <taxon>Metazoa</taxon>
        <taxon>Chordata</taxon>
        <taxon>Craniata</taxon>
        <taxon>Vertebrata</taxon>
        <taxon>Euteleostomi</taxon>
        <taxon>Mammalia</taxon>
        <taxon>Eutheria</taxon>
        <taxon>Euarchontoglires</taxon>
        <taxon>Glires</taxon>
        <taxon>Rodentia</taxon>
        <taxon>Myomorpha</taxon>
        <taxon>Muroidea</taxon>
        <taxon>Muridae</taxon>
        <taxon>Murinae</taxon>
        <taxon>Mus</taxon>
        <taxon>Mus</taxon>
    </lineage>
</organism>
<gene>
    <name evidence="7" type="primary">Shmt2</name>
</gene>
<name>GLYM_MOUSE</name>
<sequence>MVSFSLLRTTRPLQRCGQLVCMAARAQHSKVAQTQAGEAAGGWTGQESLSDSDPEMWELLQREKDRQCRGLELIASENFCSRAALEALGSCLNNKYSEGYPGKRYYGGAEVVDEIELLCQRRALEAFDLDPAQWGVNVQPYSGSPANLAAYTALLQPHDRIMGLDLPDGGHLTHGYMSDVKRISATSIFFESMPYKLNPQTGLIDYDQLALTARLFRPRLIIAGTSAYARLIDYARMREVCDEVRAHLLADMAHISGLVAAKVIPSPFKYADVVTTTTHKTLRGARSGLIFYRKGVRTVDPKTGKEIPYTFEDRINFAVFPSLQGGPHNHAIAAVAVALKQACTPMFREYSLQVLRNAQAMADALLKRGYSLVSGGTDTHLVLVDLRPKGLDGARAERVLELVSITANKNTCPGDRSAITPGGLRLGAPALTSRQFREDDFRRVVDFIDEGVNIGLEVKRKTAKLQDFKSFLLKDPETSQRLANLRQQVEQFARGFPMPGFDER</sequence>